<evidence type="ECO:0000255" key="1">
    <source>
        <dbReference type="HAMAP-Rule" id="MF_02006"/>
    </source>
</evidence>
<feature type="chain" id="PRO_1000189313" description="Tyrosine--tRNA ligase">
    <location>
        <begin position="1"/>
        <end position="425"/>
    </location>
</feature>
<feature type="domain" description="S4 RNA-binding" evidence="1">
    <location>
        <begin position="358"/>
        <end position="424"/>
    </location>
</feature>
<feature type="short sequence motif" description="'HIGH' region">
    <location>
        <begin position="39"/>
        <end position="48"/>
    </location>
</feature>
<feature type="short sequence motif" description="'KMSKS' region">
    <location>
        <begin position="231"/>
        <end position="235"/>
    </location>
</feature>
<feature type="binding site" evidence="1">
    <location>
        <position position="34"/>
    </location>
    <ligand>
        <name>L-tyrosine</name>
        <dbReference type="ChEBI" id="CHEBI:58315"/>
    </ligand>
</feature>
<feature type="binding site" evidence="1">
    <location>
        <position position="171"/>
    </location>
    <ligand>
        <name>L-tyrosine</name>
        <dbReference type="ChEBI" id="CHEBI:58315"/>
    </ligand>
</feature>
<feature type="binding site" evidence="1">
    <location>
        <position position="175"/>
    </location>
    <ligand>
        <name>L-tyrosine</name>
        <dbReference type="ChEBI" id="CHEBI:58315"/>
    </ligand>
</feature>
<feature type="binding site" evidence="1">
    <location>
        <position position="234"/>
    </location>
    <ligand>
        <name>ATP</name>
        <dbReference type="ChEBI" id="CHEBI:30616"/>
    </ligand>
</feature>
<comment type="function">
    <text evidence="1">Catalyzes the attachment of tyrosine to tRNA(Tyr) in a two-step reaction: tyrosine is first activated by ATP to form Tyr-AMP and then transferred to the acceptor end of tRNA(Tyr).</text>
</comment>
<comment type="catalytic activity">
    <reaction evidence="1">
        <text>tRNA(Tyr) + L-tyrosine + ATP = L-tyrosyl-tRNA(Tyr) + AMP + diphosphate + H(+)</text>
        <dbReference type="Rhea" id="RHEA:10220"/>
        <dbReference type="Rhea" id="RHEA-COMP:9706"/>
        <dbReference type="Rhea" id="RHEA-COMP:9707"/>
        <dbReference type="ChEBI" id="CHEBI:15378"/>
        <dbReference type="ChEBI" id="CHEBI:30616"/>
        <dbReference type="ChEBI" id="CHEBI:33019"/>
        <dbReference type="ChEBI" id="CHEBI:58315"/>
        <dbReference type="ChEBI" id="CHEBI:78442"/>
        <dbReference type="ChEBI" id="CHEBI:78536"/>
        <dbReference type="ChEBI" id="CHEBI:456215"/>
        <dbReference type="EC" id="6.1.1.1"/>
    </reaction>
</comment>
<comment type="subunit">
    <text evidence="1">Homodimer.</text>
</comment>
<comment type="subcellular location">
    <subcellularLocation>
        <location evidence="1">Cytoplasm</location>
    </subcellularLocation>
</comment>
<comment type="similarity">
    <text evidence="1">Belongs to the class-I aminoacyl-tRNA synthetase family. TyrS type 1 subfamily.</text>
</comment>
<organism>
    <name type="scientific">Opitutus terrae (strain DSM 11246 / JCM 15787 / PB90-1)</name>
    <dbReference type="NCBI Taxonomy" id="452637"/>
    <lineage>
        <taxon>Bacteria</taxon>
        <taxon>Pseudomonadati</taxon>
        <taxon>Verrucomicrobiota</taxon>
        <taxon>Opitutia</taxon>
        <taxon>Opitutales</taxon>
        <taxon>Opitutaceae</taxon>
        <taxon>Opitutus</taxon>
    </lineage>
</organism>
<name>SYY_OPITP</name>
<accession>B1ZUZ4</accession>
<protein>
    <recommendedName>
        <fullName evidence="1">Tyrosine--tRNA ligase</fullName>
        <ecNumber evidence="1">6.1.1.1</ecNumber>
    </recommendedName>
    <alternativeName>
        <fullName evidence="1">Tyrosyl-tRNA synthetase</fullName>
        <shortName evidence="1">TyrRS</shortName>
    </alternativeName>
</protein>
<gene>
    <name evidence="1" type="primary">tyrS</name>
    <name type="ordered locus">Oter_2683</name>
</gene>
<keyword id="KW-0030">Aminoacyl-tRNA synthetase</keyword>
<keyword id="KW-0067">ATP-binding</keyword>
<keyword id="KW-0963">Cytoplasm</keyword>
<keyword id="KW-0436">Ligase</keyword>
<keyword id="KW-0547">Nucleotide-binding</keyword>
<keyword id="KW-0648">Protein biosynthesis</keyword>
<keyword id="KW-1185">Reference proteome</keyword>
<keyword id="KW-0694">RNA-binding</keyword>
<reference key="1">
    <citation type="journal article" date="2011" name="J. Bacteriol.">
        <title>Genome sequence of the verrucomicrobium Opitutus terrae PB90-1, an abundant inhabitant of rice paddy soil ecosystems.</title>
        <authorList>
            <person name="van Passel M.W."/>
            <person name="Kant R."/>
            <person name="Palva A."/>
            <person name="Copeland A."/>
            <person name="Lucas S."/>
            <person name="Lapidus A."/>
            <person name="Glavina del Rio T."/>
            <person name="Pitluck S."/>
            <person name="Goltsman E."/>
            <person name="Clum A."/>
            <person name="Sun H."/>
            <person name="Schmutz J."/>
            <person name="Larimer F.W."/>
            <person name="Land M.L."/>
            <person name="Hauser L."/>
            <person name="Kyrpides N."/>
            <person name="Mikhailova N."/>
            <person name="Richardson P.P."/>
            <person name="Janssen P.H."/>
            <person name="de Vos W.M."/>
            <person name="Smidt H."/>
        </authorList>
    </citation>
    <scope>NUCLEOTIDE SEQUENCE [LARGE SCALE GENOMIC DNA]</scope>
    <source>
        <strain>DSM 11246 / JCM 15787 / PB90-1</strain>
    </source>
</reference>
<dbReference type="EC" id="6.1.1.1" evidence="1"/>
<dbReference type="EMBL" id="CP001032">
    <property type="protein sequence ID" value="ACB75964.1"/>
    <property type="molecule type" value="Genomic_DNA"/>
</dbReference>
<dbReference type="RefSeq" id="WP_012375499.1">
    <property type="nucleotide sequence ID" value="NC_010571.1"/>
</dbReference>
<dbReference type="SMR" id="B1ZUZ4"/>
<dbReference type="STRING" id="452637.Oter_2683"/>
<dbReference type="KEGG" id="ote:Oter_2683"/>
<dbReference type="eggNOG" id="COG0162">
    <property type="taxonomic scope" value="Bacteria"/>
</dbReference>
<dbReference type="HOGENOM" id="CLU_024003_0_3_0"/>
<dbReference type="OrthoDB" id="9804243at2"/>
<dbReference type="Proteomes" id="UP000007013">
    <property type="component" value="Chromosome"/>
</dbReference>
<dbReference type="GO" id="GO:0005829">
    <property type="term" value="C:cytosol"/>
    <property type="evidence" value="ECO:0007669"/>
    <property type="project" value="TreeGrafter"/>
</dbReference>
<dbReference type="GO" id="GO:0005524">
    <property type="term" value="F:ATP binding"/>
    <property type="evidence" value="ECO:0007669"/>
    <property type="project" value="UniProtKB-UniRule"/>
</dbReference>
<dbReference type="GO" id="GO:0003723">
    <property type="term" value="F:RNA binding"/>
    <property type="evidence" value="ECO:0007669"/>
    <property type="project" value="UniProtKB-KW"/>
</dbReference>
<dbReference type="GO" id="GO:0004831">
    <property type="term" value="F:tyrosine-tRNA ligase activity"/>
    <property type="evidence" value="ECO:0007669"/>
    <property type="project" value="UniProtKB-UniRule"/>
</dbReference>
<dbReference type="GO" id="GO:0006437">
    <property type="term" value="P:tyrosyl-tRNA aminoacylation"/>
    <property type="evidence" value="ECO:0007669"/>
    <property type="project" value="UniProtKB-UniRule"/>
</dbReference>
<dbReference type="CDD" id="cd00165">
    <property type="entry name" value="S4"/>
    <property type="match status" value="1"/>
</dbReference>
<dbReference type="CDD" id="cd00805">
    <property type="entry name" value="TyrRS_core"/>
    <property type="match status" value="1"/>
</dbReference>
<dbReference type="FunFam" id="1.10.240.10:FF:000001">
    <property type="entry name" value="Tyrosine--tRNA ligase"/>
    <property type="match status" value="1"/>
</dbReference>
<dbReference type="FunFam" id="3.40.50.620:FF:000008">
    <property type="entry name" value="Tyrosine--tRNA ligase"/>
    <property type="match status" value="1"/>
</dbReference>
<dbReference type="Gene3D" id="3.40.50.620">
    <property type="entry name" value="HUPs"/>
    <property type="match status" value="1"/>
</dbReference>
<dbReference type="Gene3D" id="3.10.290.10">
    <property type="entry name" value="RNA-binding S4 domain"/>
    <property type="match status" value="1"/>
</dbReference>
<dbReference type="Gene3D" id="1.10.240.10">
    <property type="entry name" value="Tyrosyl-Transfer RNA Synthetase"/>
    <property type="match status" value="1"/>
</dbReference>
<dbReference type="HAMAP" id="MF_02006">
    <property type="entry name" value="Tyr_tRNA_synth_type1"/>
    <property type="match status" value="1"/>
</dbReference>
<dbReference type="InterPro" id="IPR001412">
    <property type="entry name" value="aa-tRNA-synth_I_CS"/>
</dbReference>
<dbReference type="InterPro" id="IPR002305">
    <property type="entry name" value="aa-tRNA-synth_Ic"/>
</dbReference>
<dbReference type="InterPro" id="IPR014729">
    <property type="entry name" value="Rossmann-like_a/b/a_fold"/>
</dbReference>
<dbReference type="InterPro" id="IPR002942">
    <property type="entry name" value="S4_RNA-bd"/>
</dbReference>
<dbReference type="InterPro" id="IPR036986">
    <property type="entry name" value="S4_RNA-bd_sf"/>
</dbReference>
<dbReference type="InterPro" id="IPR054608">
    <property type="entry name" value="SYY-like_C"/>
</dbReference>
<dbReference type="InterPro" id="IPR002307">
    <property type="entry name" value="Tyr-tRNA-ligase"/>
</dbReference>
<dbReference type="InterPro" id="IPR024088">
    <property type="entry name" value="Tyr-tRNA-ligase_bac-type"/>
</dbReference>
<dbReference type="InterPro" id="IPR024107">
    <property type="entry name" value="Tyr-tRNA-ligase_bac_1"/>
</dbReference>
<dbReference type="NCBIfam" id="TIGR00234">
    <property type="entry name" value="tyrS"/>
    <property type="match status" value="1"/>
</dbReference>
<dbReference type="PANTHER" id="PTHR11766:SF0">
    <property type="entry name" value="TYROSINE--TRNA LIGASE, MITOCHONDRIAL"/>
    <property type="match status" value="1"/>
</dbReference>
<dbReference type="PANTHER" id="PTHR11766">
    <property type="entry name" value="TYROSYL-TRNA SYNTHETASE"/>
    <property type="match status" value="1"/>
</dbReference>
<dbReference type="Pfam" id="PF22421">
    <property type="entry name" value="SYY_C-terminal"/>
    <property type="match status" value="1"/>
</dbReference>
<dbReference type="Pfam" id="PF00579">
    <property type="entry name" value="tRNA-synt_1b"/>
    <property type="match status" value="1"/>
</dbReference>
<dbReference type="PRINTS" id="PR01040">
    <property type="entry name" value="TRNASYNTHTYR"/>
</dbReference>
<dbReference type="SMART" id="SM00363">
    <property type="entry name" value="S4"/>
    <property type="match status" value="1"/>
</dbReference>
<dbReference type="SUPFAM" id="SSF55174">
    <property type="entry name" value="Alpha-L RNA-binding motif"/>
    <property type="match status" value="1"/>
</dbReference>
<dbReference type="SUPFAM" id="SSF52374">
    <property type="entry name" value="Nucleotidylyl transferase"/>
    <property type="match status" value="1"/>
</dbReference>
<dbReference type="PROSITE" id="PS00178">
    <property type="entry name" value="AA_TRNA_LIGASE_I"/>
    <property type="match status" value="1"/>
</dbReference>
<dbReference type="PROSITE" id="PS50889">
    <property type="entry name" value="S4"/>
    <property type="match status" value="1"/>
</dbReference>
<proteinExistence type="inferred from homology"/>
<sequence length="425" mass="45953">MTILDDLQWRGLYADCTDLAALTQRLGQGPVTLYCGFDPTADSLHVGNLVPLLALRRFQLHGHHPIALAGGATGMVGDPSGRSAERNLLTPDQVAHNIASIKQQLGRFLDFDATTNPARMVDNSTWTAPISFLEFLRDVGKHFSVNAMLAKESVRARLESESGISYTEFSYMLLQAHDFLHLRETMNCELQVGATDQWGNITAGTDLIRKKLGAPAWGLTFPLLTKSDGTKYGKSTSGAVYLDPKRTTPYRFYQFFVQAEDADVIKLLKVLTFLSAEEITALDTDLKANPGARAAQKALARAVTTLVHGDTECANAIRASEIMFGGGLDGISESLFQDVVGEIPTKELEAAKLSGAGAPLVELLVHAGLAPSKGQARKDIDGGGIYVNNARVGEASRAVTTGELLFGKYLLLRKGKRTYTVVKIV</sequence>